<feature type="chain" id="PRO_0000364971" description="Ferredoxin--NADP reductase">
    <location>
        <begin position="1"/>
        <end position="330"/>
    </location>
</feature>
<feature type="binding site" evidence="1">
    <location>
        <position position="35"/>
    </location>
    <ligand>
        <name>FAD</name>
        <dbReference type="ChEBI" id="CHEBI:57692"/>
    </ligand>
</feature>
<feature type="binding site" evidence="1">
    <location>
        <position position="43"/>
    </location>
    <ligand>
        <name>FAD</name>
        <dbReference type="ChEBI" id="CHEBI:57692"/>
    </ligand>
</feature>
<feature type="binding site" evidence="1">
    <location>
        <position position="48"/>
    </location>
    <ligand>
        <name>FAD</name>
        <dbReference type="ChEBI" id="CHEBI:57692"/>
    </ligand>
</feature>
<feature type="binding site" evidence="1">
    <location>
        <position position="90"/>
    </location>
    <ligand>
        <name>FAD</name>
        <dbReference type="ChEBI" id="CHEBI:57692"/>
    </ligand>
</feature>
<feature type="binding site" evidence="1">
    <location>
        <position position="123"/>
    </location>
    <ligand>
        <name>FAD</name>
        <dbReference type="ChEBI" id="CHEBI:57692"/>
    </ligand>
</feature>
<feature type="binding site" evidence="1">
    <location>
        <position position="285"/>
    </location>
    <ligand>
        <name>FAD</name>
        <dbReference type="ChEBI" id="CHEBI:57692"/>
    </ligand>
</feature>
<feature type="binding site" evidence="1">
    <location>
        <position position="326"/>
    </location>
    <ligand>
        <name>FAD</name>
        <dbReference type="ChEBI" id="CHEBI:57692"/>
    </ligand>
</feature>
<reference key="1">
    <citation type="journal article" date="2007" name="J. Bacteriol.">
        <title>Complete genome of acute rheumatic fever-associated serotype M5 Streptococcus pyogenes strain Manfredo.</title>
        <authorList>
            <person name="Holden M.T.G."/>
            <person name="Scott A."/>
            <person name="Cherevach I."/>
            <person name="Chillingworth T."/>
            <person name="Churcher C."/>
            <person name="Cronin A."/>
            <person name="Dowd L."/>
            <person name="Feltwell T."/>
            <person name="Hamlin N."/>
            <person name="Holroyd S."/>
            <person name="Jagels K."/>
            <person name="Moule S."/>
            <person name="Mungall K."/>
            <person name="Quail M.A."/>
            <person name="Price C."/>
            <person name="Rabbinowitsch E."/>
            <person name="Sharp S."/>
            <person name="Skelton J."/>
            <person name="Whitehead S."/>
            <person name="Barrell B.G."/>
            <person name="Kehoe M."/>
            <person name="Parkhill J."/>
        </authorList>
    </citation>
    <scope>NUCLEOTIDE SEQUENCE [LARGE SCALE GENOMIC DNA]</scope>
    <source>
        <strain>Manfredo</strain>
    </source>
</reference>
<proteinExistence type="inferred from homology"/>
<sequence length="330" mass="36148">MKDKAYDITIIGGGPIGLFAAFYAGLRGVTVKIIESLSELGGQPAILYPEKMIYDIPAYPSLTGVELTENLIKQLSRFEDRTTICLKEEVLTFDKVKGGFSIRTNKAEHFSKAIIIACGNGAFAPRTLGLESEENFADHNLFYNVHQLDQFAGQKVVICGGGDSAVDWALALEDIAESVTVVHRRDAFRAHEHSVELLKTSTVNLLTPYVPKALKGIGNLAEKLVIQKVKEDEVLELELDSLIVSFGFSTSNKNLKNWNLDYKRSSITVSPLFQTSQEGIFAIGDAAAYNGKVDLIATGFGEAPTAVNQAINYIYPDRDNRVVHSTSLID</sequence>
<evidence type="ECO:0000255" key="1">
    <source>
        <dbReference type="HAMAP-Rule" id="MF_01685"/>
    </source>
</evidence>
<accession>A2RF47</accession>
<organism>
    <name type="scientific">Streptococcus pyogenes serotype M5 (strain Manfredo)</name>
    <dbReference type="NCBI Taxonomy" id="160491"/>
    <lineage>
        <taxon>Bacteria</taxon>
        <taxon>Bacillati</taxon>
        <taxon>Bacillota</taxon>
        <taxon>Bacilli</taxon>
        <taxon>Lactobacillales</taxon>
        <taxon>Streptococcaceae</taxon>
        <taxon>Streptococcus</taxon>
    </lineage>
</organism>
<comment type="catalytic activity">
    <reaction evidence="1">
        <text>2 reduced [2Fe-2S]-[ferredoxin] + NADP(+) + H(+) = 2 oxidized [2Fe-2S]-[ferredoxin] + NADPH</text>
        <dbReference type="Rhea" id="RHEA:20125"/>
        <dbReference type="Rhea" id="RHEA-COMP:10000"/>
        <dbReference type="Rhea" id="RHEA-COMP:10001"/>
        <dbReference type="ChEBI" id="CHEBI:15378"/>
        <dbReference type="ChEBI" id="CHEBI:33737"/>
        <dbReference type="ChEBI" id="CHEBI:33738"/>
        <dbReference type="ChEBI" id="CHEBI:57783"/>
        <dbReference type="ChEBI" id="CHEBI:58349"/>
        <dbReference type="EC" id="1.18.1.2"/>
    </reaction>
</comment>
<comment type="cofactor">
    <cofactor evidence="1">
        <name>FAD</name>
        <dbReference type="ChEBI" id="CHEBI:57692"/>
    </cofactor>
    <text evidence="1">Binds 1 FAD per subunit.</text>
</comment>
<comment type="subunit">
    <text evidence="1">Homodimer.</text>
</comment>
<comment type="similarity">
    <text evidence="1">Belongs to the ferredoxin--NADP reductase type 2 family.</text>
</comment>
<name>FENR_STRPG</name>
<gene>
    <name type="ordered locus">SpyM51151</name>
</gene>
<keyword id="KW-0274">FAD</keyword>
<keyword id="KW-0285">Flavoprotein</keyword>
<keyword id="KW-0521">NADP</keyword>
<keyword id="KW-0560">Oxidoreductase</keyword>
<dbReference type="EC" id="1.18.1.2" evidence="1"/>
<dbReference type="EMBL" id="AM295007">
    <property type="protein sequence ID" value="CAM30476.1"/>
    <property type="molecule type" value="Genomic_DNA"/>
</dbReference>
<dbReference type="RefSeq" id="WP_002990220.1">
    <property type="nucleotide sequence ID" value="NC_009332.1"/>
</dbReference>
<dbReference type="SMR" id="A2RF47"/>
<dbReference type="KEGG" id="spf:SpyM51151"/>
<dbReference type="HOGENOM" id="CLU_031864_5_5_9"/>
<dbReference type="GO" id="GO:0004324">
    <property type="term" value="F:ferredoxin-NADP+ reductase activity"/>
    <property type="evidence" value="ECO:0007669"/>
    <property type="project" value="UniProtKB-UniRule"/>
</dbReference>
<dbReference type="GO" id="GO:0050660">
    <property type="term" value="F:flavin adenine dinucleotide binding"/>
    <property type="evidence" value="ECO:0007669"/>
    <property type="project" value="UniProtKB-UniRule"/>
</dbReference>
<dbReference type="GO" id="GO:0050661">
    <property type="term" value="F:NADP binding"/>
    <property type="evidence" value="ECO:0007669"/>
    <property type="project" value="UniProtKB-UniRule"/>
</dbReference>
<dbReference type="Gene3D" id="3.50.50.60">
    <property type="entry name" value="FAD/NAD(P)-binding domain"/>
    <property type="match status" value="2"/>
</dbReference>
<dbReference type="HAMAP" id="MF_01685">
    <property type="entry name" value="FENR2"/>
    <property type="match status" value="1"/>
</dbReference>
<dbReference type="InterPro" id="IPR036188">
    <property type="entry name" value="FAD/NAD-bd_sf"/>
</dbReference>
<dbReference type="InterPro" id="IPR023753">
    <property type="entry name" value="FAD/NAD-binding_dom"/>
</dbReference>
<dbReference type="InterPro" id="IPR022890">
    <property type="entry name" value="Fd--NADP_Rdtase_type_2"/>
</dbReference>
<dbReference type="InterPro" id="IPR050097">
    <property type="entry name" value="Ferredoxin-NADP_redctase_2"/>
</dbReference>
<dbReference type="PANTHER" id="PTHR48105">
    <property type="entry name" value="THIOREDOXIN REDUCTASE 1-RELATED-RELATED"/>
    <property type="match status" value="1"/>
</dbReference>
<dbReference type="Pfam" id="PF07992">
    <property type="entry name" value="Pyr_redox_2"/>
    <property type="match status" value="1"/>
</dbReference>
<dbReference type="PRINTS" id="PR00368">
    <property type="entry name" value="FADPNR"/>
</dbReference>
<dbReference type="PRINTS" id="PR00469">
    <property type="entry name" value="PNDRDTASEII"/>
</dbReference>
<dbReference type="SUPFAM" id="SSF51905">
    <property type="entry name" value="FAD/NAD(P)-binding domain"/>
    <property type="match status" value="1"/>
</dbReference>
<protein>
    <recommendedName>
        <fullName evidence="1">Ferredoxin--NADP reductase</fullName>
        <shortName evidence="1">FNR</shortName>
        <shortName evidence="1">Fd-NADP(+) reductase</shortName>
        <ecNumber evidence="1">1.18.1.2</ecNumber>
    </recommendedName>
</protein>